<proteinExistence type="inferred from homology"/>
<gene>
    <name evidence="1" type="primary">rpmB</name>
    <name type="ordered locus">NAMH_1582</name>
</gene>
<sequence length="61" mass="6927">MARKCEICGKGPQFGNRVSHSNRKTRHKFNPNIQSVRIEINGVSRKVKICTSCLRSLKKSV</sequence>
<feature type="chain" id="PRO_1000195933" description="Large ribosomal subunit protein bL28">
    <location>
        <begin position="1"/>
        <end position="61"/>
    </location>
</feature>
<comment type="similarity">
    <text evidence="1">Belongs to the bacterial ribosomal protein bL28 family.</text>
</comment>
<name>RL28_NAUPA</name>
<accession>B9L6I1</accession>
<reference key="1">
    <citation type="journal article" date="2009" name="PLoS Genet.">
        <title>Adaptations to submarine hydrothermal environments exemplified by the genome of Nautilia profundicola.</title>
        <authorList>
            <person name="Campbell B.J."/>
            <person name="Smith J.L."/>
            <person name="Hanson T.E."/>
            <person name="Klotz M.G."/>
            <person name="Stein L.Y."/>
            <person name="Lee C.K."/>
            <person name="Wu D."/>
            <person name="Robinson J.M."/>
            <person name="Khouri H.M."/>
            <person name="Eisen J.A."/>
            <person name="Cary S.C."/>
        </authorList>
    </citation>
    <scope>NUCLEOTIDE SEQUENCE [LARGE SCALE GENOMIC DNA]</scope>
    <source>
        <strain>ATCC BAA-1463 / DSM 18972 / AmH</strain>
    </source>
</reference>
<keyword id="KW-0687">Ribonucleoprotein</keyword>
<keyword id="KW-0689">Ribosomal protein</keyword>
<evidence type="ECO:0000255" key="1">
    <source>
        <dbReference type="HAMAP-Rule" id="MF_00373"/>
    </source>
</evidence>
<evidence type="ECO:0000305" key="2"/>
<protein>
    <recommendedName>
        <fullName evidence="1">Large ribosomal subunit protein bL28</fullName>
    </recommendedName>
    <alternativeName>
        <fullName evidence="2">50S ribosomal protein L28</fullName>
    </alternativeName>
</protein>
<dbReference type="EMBL" id="CP001279">
    <property type="protein sequence ID" value="ACM93566.1"/>
    <property type="molecule type" value="Genomic_DNA"/>
</dbReference>
<dbReference type="RefSeq" id="WP_015902618.1">
    <property type="nucleotide sequence ID" value="NC_012115.1"/>
</dbReference>
<dbReference type="SMR" id="B9L6I1"/>
<dbReference type="STRING" id="598659.NAMH_1582"/>
<dbReference type="KEGG" id="nam:NAMH_1582"/>
<dbReference type="eggNOG" id="COG0227">
    <property type="taxonomic scope" value="Bacteria"/>
</dbReference>
<dbReference type="HOGENOM" id="CLU_064548_7_0_7"/>
<dbReference type="OrthoDB" id="9805609at2"/>
<dbReference type="Proteomes" id="UP000000448">
    <property type="component" value="Chromosome"/>
</dbReference>
<dbReference type="GO" id="GO:1990904">
    <property type="term" value="C:ribonucleoprotein complex"/>
    <property type="evidence" value="ECO:0007669"/>
    <property type="project" value="UniProtKB-KW"/>
</dbReference>
<dbReference type="GO" id="GO:0005840">
    <property type="term" value="C:ribosome"/>
    <property type="evidence" value="ECO:0007669"/>
    <property type="project" value="UniProtKB-KW"/>
</dbReference>
<dbReference type="GO" id="GO:0003735">
    <property type="term" value="F:structural constituent of ribosome"/>
    <property type="evidence" value="ECO:0007669"/>
    <property type="project" value="InterPro"/>
</dbReference>
<dbReference type="GO" id="GO:0006412">
    <property type="term" value="P:translation"/>
    <property type="evidence" value="ECO:0007669"/>
    <property type="project" value="UniProtKB-UniRule"/>
</dbReference>
<dbReference type="Gene3D" id="2.20.150.30">
    <property type="match status" value="1"/>
</dbReference>
<dbReference type="Gene3D" id="2.30.170.40">
    <property type="entry name" value="Ribosomal protein L28/L24"/>
    <property type="match status" value="1"/>
</dbReference>
<dbReference type="HAMAP" id="MF_00373">
    <property type="entry name" value="Ribosomal_bL28"/>
    <property type="match status" value="1"/>
</dbReference>
<dbReference type="InterPro" id="IPR050096">
    <property type="entry name" value="Bacterial_rp_bL28"/>
</dbReference>
<dbReference type="InterPro" id="IPR026569">
    <property type="entry name" value="Ribosomal_bL28"/>
</dbReference>
<dbReference type="InterPro" id="IPR034704">
    <property type="entry name" value="Ribosomal_bL28/bL31-like_sf"/>
</dbReference>
<dbReference type="InterPro" id="IPR001383">
    <property type="entry name" value="Ribosomal_bL28_bact-type"/>
</dbReference>
<dbReference type="InterPro" id="IPR037147">
    <property type="entry name" value="Ribosomal_bL28_sf"/>
</dbReference>
<dbReference type="NCBIfam" id="TIGR00009">
    <property type="entry name" value="L28"/>
    <property type="match status" value="1"/>
</dbReference>
<dbReference type="PANTHER" id="PTHR39080">
    <property type="entry name" value="50S RIBOSOMAL PROTEIN L28"/>
    <property type="match status" value="1"/>
</dbReference>
<dbReference type="PANTHER" id="PTHR39080:SF1">
    <property type="entry name" value="LARGE RIBOSOMAL SUBUNIT PROTEIN BL28A"/>
    <property type="match status" value="1"/>
</dbReference>
<dbReference type="Pfam" id="PF00830">
    <property type="entry name" value="Ribosomal_L28"/>
    <property type="match status" value="1"/>
</dbReference>
<dbReference type="SUPFAM" id="SSF143800">
    <property type="entry name" value="L28p-like"/>
    <property type="match status" value="1"/>
</dbReference>
<organism>
    <name type="scientific">Nautilia profundicola (strain ATCC BAA-1463 / DSM 18972 / AmH)</name>
    <dbReference type="NCBI Taxonomy" id="598659"/>
    <lineage>
        <taxon>Bacteria</taxon>
        <taxon>Pseudomonadati</taxon>
        <taxon>Campylobacterota</taxon>
        <taxon>Epsilonproteobacteria</taxon>
        <taxon>Nautiliales</taxon>
        <taxon>Nautiliaceae</taxon>
        <taxon>Nautilia</taxon>
    </lineage>
</organism>